<dbReference type="EMBL" id="BX571857">
    <property type="protein sequence ID" value="CAG44367.1"/>
    <property type="molecule type" value="Genomic_DNA"/>
</dbReference>
<dbReference type="RefSeq" id="WP_000659675.1">
    <property type="nucleotide sequence ID" value="NC_002953.3"/>
</dbReference>
<dbReference type="SMR" id="Q6G610"/>
<dbReference type="KEGG" id="sas:SAS2550"/>
<dbReference type="HOGENOM" id="CLU_082668_1_1_9"/>
<dbReference type="UniPathway" id="UPA00934"/>
<dbReference type="GO" id="GO:0005886">
    <property type="term" value="C:plasma membrane"/>
    <property type="evidence" value="ECO:0007669"/>
    <property type="project" value="UniProtKB-SubCell"/>
</dbReference>
<dbReference type="GO" id="GO:0004713">
    <property type="term" value="F:protein tyrosine kinase activity"/>
    <property type="evidence" value="ECO:0007669"/>
    <property type="project" value="TreeGrafter"/>
</dbReference>
<dbReference type="GO" id="GO:0045227">
    <property type="term" value="P:capsule polysaccharide biosynthetic process"/>
    <property type="evidence" value="ECO:0007669"/>
    <property type="project" value="UniProtKB-UniPathway"/>
</dbReference>
<dbReference type="InterPro" id="IPR050445">
    <property type="entry name" value="Bact_polysacc_biosynth/exp"/>
</dbReference>
<dbReference type="InterPro" id="IPR003856">
    <property type="entry name" value="LPS_length_determ_N_term"/>
</dbReference>
<dbReference type="PANTHER" id="PTHR32309:SF13">
    <property type="entry name" value="FERRIC ENTEROBACTIN TRANSPORT PROTEIN FEPE"/>
    <property type="match status" value="1"/>
</dbReference>
<dbReference type="PANTHER" id="PTHR32309">
    <property type="entry name" value="TYROSINE-PROTEIN KINASE"/>
    <property type="match status" value="1"/>
</dbReference>
<dbReference type="Pfam" id="PF02706">
    <property type="entry name" value="Wzz"/>
    <property type="match status" value="1"/>
</dbReference>
<proteinExistence type="inferred from homology"/>
<gene>
    <name type="primary">capA</name>
    <name type="ordered locus">SAS2550</name>
</gene>
<name>CAPA_STAAS</name>
<protein>
    <recommendedName>
        <fullName>Capsular polysaccharide biosynthesis protein CapA</fullName>
    </recommendedName>
</protein>
<keyword id="KW-0972">Capsule biogenesis/degradation</keyword>
<keyword id="KW-1003">Cell membrane</keyword>
<keyword id="KW-0270">Exopolysaccharide synthesis</keyword>
<keyword id="KW-0472">Membrane</keyword>
<keyword id="KW-0812">Transmembrane</keyword>
<keyword id="KW-1133">Transmembrane helix</keyword>
<reference key="1">
    <citation type="journal article" date="2004" name="Proc. Natl. Acad. Sci. U.S.A.">
        <title>Complete genomes of two clinical Staphylococcus aureus strains: evidence for the rapid evolution of virulence and drug resistance.</title>
        <authorList>
            <person name="Holden M.T.G."/>
            <person name="Feil E.J."/>
            <person name="Lindsay J.A."/>
            <person name="Peacock S.J."/>
            <person name="Day N.P.J."/>
            <person name="Enright M.C."/>
            <person name="Foster T.J."/>
            <person name="Moore C.E."/>
            <person name="Hurst L."/>
            <person name="Atkin R."/>
            <person name="Barron A."/>
            <person name="Bason N."/>
            <person name="Bentley S.D."/>
            <person name="Chillingworth C."/>
            <person name="Chillingworth T."/>
            <person name="Churcher C."/>
            <person name="Clark L."/>
            <person name="Corton C."/>
            <person name="Cronin A."/>
            <person name="Doggett J."/>
            <person name="Dowd L."/>
            <person name="Feltwell T."/>
            <person name="Hance Z."/>
            <person name="Harris B."/>
            <person name="Hauser H."/>
            <person name="Holroyd S."/>
            <person name="Jagels K."/>
            <person name="James K.D."/>
            <person name="Lennard N."/>
            <person name="Line A."/>
            <person name="Mayes R."/>
            <person name="Moule S."/>
            <person name="Mungall K."/>
            <person name="Ormond D."/>
            <person name="Quail M.A."/>
            <person name="Rabbinowitsch E."/>
            <person name="Rutherford K.M."/>
            <person name="Sanders M."/>
            <person name="Sharp S."/>
            <person name="Simmonds M."/>
            <person name="Stevens K."/>
            <person name="Whitehead S."/>
            <person name="Barrell B.G."/>
            <person name="Spratt B.G."/>
            <person name="Parkhill J."/>
        </authorList>
    </citation>
    <scope>NUCLEOTIDE SEQUENCE [LARGE SCALE GENOMIC DNA]</scope>
    <source>
        <strain>MSSA476</strain>
    </source>
</reference>
<sequence length="220" mass="24340">MKEKFDLVKLLNILKKNIKLLLILPAICLVVSAALTFFVMPDKYTASTQILVNMKKSSSDLAFQNVQSSLQSVNTYTEIIKSPRILDKVSREFDGQYSTAELNSFLKVTNQTNSQIITVSVTTGNKSESDKIVNKISKVFAHDMPKIMSVDNVTILSSAHDNAVKVSPIVSVNLVISIIVGIVLAILIIFLKELLDKRIKTEEDVESQLGLPILGSIQKF</sequence>
<accession>Q6G610</accession>
<organism>
    <name type="scientific">Staphylococcus aureus (strain MSSA476)</name>
    <dbReference type="NCBI Taxonomy" id="282459"/>
    <lineage>
        <taxon>Bacteria</taxon>
        <taxon>Bacillati</taxon>
        <taxon>Bacillota</taxon>
        <taxon>Bacilli</taxon>
        <taxon>Bacillales</taxon>
        <taxon>Staphylococcaceae</taxon>
        <taxon>Staphylococcus</taxon>
    </lineage>
</organism>
<comment type="function">
    <text evidence="1">Required for the biosynthesis of type 1 capsular polysaccharide.</text>
</comment>
<comment type="pathway">
    <text>Capsule biogenesis; capsule polysaccharide biosynthesis.</text>
</comment>
<comment type="subcellular location">
    <subcellularLocation>
        <location evidence="3">Cell membrane</location>
        <topology evidence="3">Multi-pass membrane protein</topology>
    </subcellularLocation>
</comment>
<comment type="similarity">
    <text evidence="3">Belongs to the CpsC/CapA family.</text>
</comment>
<feature type="chain" id="PRO_0000217221" description="Capsular polysaccharide biosynthesis protein CapA">
    <location>
        <begin position="1"/>
        <end position="220"/>
    </location>
</feature>
<feature type="transmembrane region" description="Helical" evidence="2">
    <location>
        <begin position="20"/>
        <end position="40"/>
    </location>
</feature>
<feature type="transmembrane region" description="Helical" evidence="2">
    <location>
        <begin position="171"/>
        <end position="191"/>
    </location>
</feature>
<evidence type="ECO:0000250" key="1"/>
<evidence type="ECO:0000255" key="2"/>
<evidence type="ECO:0000305" key="3"/>